<comment type="function">
    <text evidence="1">Involved in the import of serine and threonine into the cell, with the concomitant import of sodium (symport system).</text>
</comment>
<comment type="catalytic activity">
    <reaction evidence="1">
        <text>L-serine(in) + Na(+)(in) = L-serine(out) + Na(+)(out)</text>
        <dbReference type="Rhea" id="RHEA:29575"/>
        <dbReference type="ChEBI" id="CHEBI:29101"/>
        <dbReference type="ChEBI" id="CHEBI:33384"/>
    </reaction>
    <physiologicalReaction direction="right-to-left" evidence="1">
        <dbReference type="Rhea" id="RHEA:29577"/>
    </physiologicalReaction>
</comment>
<comment type="catalytic activity">
    <reaction evidence="1">
        <text>L-threonine(in) + Na(+)(in) = L-threonine(out) + Na(+)(out)</text>
        <dbReference type="Rhea" id="RHEA:69999"/>
        <dbReference type="ChEBI" id="CHEBI:29101"/>
        <dbReference type="ChEBI" id="CHEBI:57926"/>
    </reaction>
    <physiologicalReaction direction="right-to-left" evidence="1">
        <dbReference type="Rhea" id="RHEA:70001"/>
    </physiologicalReaction>
</comment>
<comment type="subcellular location">
    <subcellularLocation>
        <location evidence="1">Cell inner membrane</location>
        <topology evidence="1">Multi-pass membrane protein</topology>
    </subcellularLocation>
</comment>
<comment type="similarity">
    <text evidence="1">Belongs to the dicarboxylate/amino acid:cation symporter (DAACS) (TC 2.A.23) family.</text>
</comment>
<comment type="sequence caution" evidence="2">
    <conflict type="erroneous initiation">
        <sequence resource="EMBL-CDS" id="ABG15166"/>
    </conflict>
</comment>
<accession>Q1C306</accession>
<protein>
    <recommendedName>
        <fullName evidence="1">Serine/threonine transporter SstT</fullName>
    </recommendedName>
    <alternativeName>
        <fullName evidence="1">Na(+)/serine-threonine symporter</fullName>
    </alternativeName>
</protein>
<proteinExistence type="inferred from homology"/>
<name>SSTT_YERPA</name>
<reference key="1">
    <citation type="journal article" date="2006" name="J. Bacteriol.">
        <title>Complete genome sequence of Yersinia pestis strains Antiqua and Nepal516: evidence of gene reduction in an emerging pathogen.</title>
        <authorList>
            <person name="Chain P.S.G."/>
            <person name="Hu P."/>
            <person name="Malfatti S.A."/>
            <person name="Radnedge L."/>
            <person name="Larimer F."/>
            <person name="Vergez L.M."/>
            <person name="Worsham P."/>
            <person name="Chu M.C."/>
            <person name="Andersen G.L."/>
        </authorList>
    </citation>
    <scope>NUCLEOTIDE SEQUENCE [LARGE SCALE GENOMIC DNA]</scope>
    <source>
        <strain>Antiqua</strain>
    </source>
</reference>
<keyword id="KW-0029">Amino-acid transport</keyword>
<keyword id="KW-0997">Cell inner membrane</keyword>
<keyword id="KW-1003">Cell membrane</keyword>
<keyword id="KW-0472">Membrane</keyword>
<keyword id="KW-0769">Symport</keyword>
<keyword id="KW-0812">Transmembrane</keyword>
<keyword id="KW-1133">Transmembrane helix</keyword>
<keyword id="KW-0813">Transport</keyword>
<dbReference type="EMBL" id="CP000308">
    <property type="protein sequence ID" value="ABG15166.1"/>
    <property type="status" value="ALT_INIT"/>
    <property type="molecule type" value="Genomic_DNA"/>
</dbReference>
<dbReference type="RefSeq" id="WP_002216063.1">
    <property type="nucleotide sequence ID" value="NZ_CP009906.1"/>
</dbReference>
<dbReference type="SMR" id="Q1C306"/>
<dbReference type="GeneID" id="57974032"/>
<dbReference type="KEGG" id="ypa:YPA_3204"/>
<dbReference type="Proteomes" id="UP000001971">
    <property type="component" value="Chromosome"/>
</dbReference>
<dbReference type="GO" id="GO:0005886">
    <property type="term" value="C:plasma membrane"/>
    <property type="evidence" value="ECO:0007669"/>
    <property type="project" value="UniProtKB-SubCell"/>
</dbReference>
<dbReference type="GO" id="GO:0005295">
    <property type="term" value="F:neutral L-amino acid:sodium symporter activity"/>
    <property type="evidence" value="ECO:0007669"/>
    <property type="project" value="TreeGrafter"/>
</dbReference>
<dbReference type="GO" id="GO:0032329">
    <property type="term" value="P:serine transport"/>
    <property type="evidence" value="ECO:0007669"/>
    <property type="project" value="InterPro"/>
</dbReference>
<dbReference type="GO" id="GO:0015826">
    <property type="term" value="P:threonine transport"/>
    <property type="evidence" value="ECO:0007669"/>
    <property type="project" value="InterPro"/>
</dbReference>
<dbReference type="FunFam" id="1.10.3860.10:FF:000003">
    <property type="entry name" value="Serine/threonine transporter sstT"/>
    <property type="match status" value="1"/>
</dbReference>
<dbReference type="Gene3D" id="1.10.3860.10">
    <property type="entry name" value="Sodium:dicarboxylate symporter"/>
    <property type="match status" value="1"/>
</dbReference>
<dbReference type="HAMAP" id="MF_01582">
    <property type="entry name" value="Ser_Thr_transp_SstT"/>
    <property type="match status" value="1"/>
</dbReference>
<dbReference type="InterPro" id="IPR001991">
    <property type="entry name" value="Na-dicarboxylate_symporter"/>
</dbReference>
<dbReference type="InterPro" id="IPR036458">
    <property type="entry name" value="Na:dicarbo_symporter_sf"/>
</dbReference>
<dbReference type="InterPro" id="IPR023025">
    <property type="entry name" value="Ser_Thr_transp_SstT"/>
</dbReference>
<dbReference type="NCBIfam" id="NF010151">
    <property type="entry name" value="PRK13628.1"/>
    <property type="match status" value="1"/>
</dbReference>
<dbReference type="PANTHER" id="PTHR42865">
    <property type="entry name" value="PROTON/GLUTAMATE-ASPARTATE SYMPORTER"/>
    <property type="match status" value="1"/>
</dbReference>
<dbReference type="PANTHER" id="PTHR42865:SF8">
    <property type="entry name" value="SERINE_THREONINE TRANSPORTER SSTT"/>
    <property type="match status" value="1"/>
</dbReference>
<dbReference type="Pfam" id="PF00375">
    <property type="entry name" value="SDF"/>
    <property type="match status" value="1"/>
</dbReference>
<dbReference type="PRINTS" id="PR00173">
    <property type="entry name" value="EDTRNSPORT"/>
</dbReference>
<dbReference type="SUPFAM" id="SSF118215">
    <property type="entry name" value="Proton glutamate symport protein"/>
    <property type="match status" value="1"/>
</dbReference>
<sequence length="418" mass="43202">MEKTQSVFIRFIVNGSLVKQILIGLVAGIVLALVSTPAAIAVGLLGSLFVGALKAVAPVLVLMLVIASIANHKKGQKTSIRPILFLYVLGTFSAALVAVVVSFIYPSTLILVAESADITPPSGIVEVLHGLLNSIIANPIHALLNANYIGILAWAVGLGIALRHAADTTKALINDMSDAVTLVVRVVIRFAPLGIFGLVASTIAATGFGALQLYAQLLVVLIGCMLLVALVVNPLIVYWKIRRNPYPLVFACLRESGVTAFFTRSSAANIPVNMEMCKKMNLNEDTYSISIPLGATINMAGAAITITVLTLAAVHTLGITVDLPTALLLSVVAAICACGASGVAGGSLLLIPLACSMFGIPNDVAMQVVGVGFIIGVLQDSAETALNSSTDVLFTAAVCQAEDAKLANPDPLAAGKSV</sequence>
<gene>
    <name evidence="1" type="primary">sstT</name>
    <name type="ordered locus">YPA_3204</name>
</gene>
<evidence type="ECO:0000255" key="1">
    <source>
        <dbReference type="HAMAP-Rule" id="MF_01582"/>
    </source>
</evidence>
<evidence type="ECO:0000305" key="2"/>
<organism>
    <name type="scientific">Yersinia pestis bv. Antiqua (strain Antiqua)</name>
    <dbReference type="NCBI Taxonomy" id="360102"/>
    <lineage>
        <taxon>Bacteria</taxon>
        <taxon>Pseudomonadati</taxon>
        <taxon>Pseudomonadota</taxon>
        <taxon>Gammaproteobacteria</taxon>
        <taxon>Enterobacterales</taxon>
        <taxon>Yersiniaceae</taxon>
        <taxon>Yersinia</taxon>
    </lineage>
</organism>
<feature type="chain" id="PRO_0000309159" description="Serine/threonine transporter SstT">
    <location>
        <begin position="1"/>
        <end position="418"/>
    </location>
</feature>
<feature type="transmembrane region" description="Helical" evidence="1">
    <location>
        <begin position="21"/>
        <end position="41"/>
    </location>
</feature>
<feature type="transmembrane region" description="Helical" evidence="1">
    <location>
        <begin position="49"/>
        <end position="69"/>
    </location>
</feature>
<feature type="transmembrane region" description="Helical" evidence="1">
    <location>
        <begin position="83"/>
        <end position="103"/>
    </location>
</feature>
<feature type="transmembrane region" description="Helical" evidence="1">
    <location>
        <begin position="142"/>
        <end position="162"/>
    </location>
</feature>
<feature type="transmembrane region" description="Helical" evidence="1">
    <location>
        <begin position="190"/>
        <end position="210"/>
    </location>
</feature>
<feature type="transmembrane region" description="Helical" evidence="1">
    <location>
        <begin position="217"/>
        <end position="237"/>
    </location>
</feature>
<feature type="transmembrane region" description="Helical" evidence="1">
    <location>
        <begin position="299"/>
        <end position="319"/>
    </location>
</feature>
<feature type="transmembrane region" description="Helical" evidence="1">
    <location>
        <begin position="331"/>
        <end position="351"/>
    </location>
</feature>